<comment type="function">
    <text evidence="1">Catalyzes the NADPH-dependent reduction of L-glutamate 5-phosphate into L-glutamate 5-semialdehyde and phosphate. The product spontaneously undergoes cyclization to form 1-pyrroline-5-carboxylate.</text>
</comment>
<comment type="catalytic activity">
    <reaction evidence="1">
        <text>L-glutamate 5-semialdehyde + phosphate + NADP(+) = L-glutamyl 5-phosphate + NADPH + H(+)</text>
        <dbReference type="Rhea" id="RHEA:19541"/>
        <dbReference type="ChEBI" id="CHEBI:15378"/>
        <dbReference type="ChEBI" id="CHEBI:43474"/>
        <dbReference type="ChEBI" id="CHEBI:57783"/>
        <dbReference type="ChEBI" id="CHEBI:58066"/>
        <dbReference type="ChEBI" id="CHEBI:58274"/>
        <dbReference type="ChEBI" id="CHEBI:58349"/>
        <dbReference type="EC" id="1.2.1.41"/>
    </reaction>
</comment>
<comment type="pathway">
    <text evidence="1">Amino-acid biosynthesis; L-proline biosynthesis; L-glutamate 5-semialdehyde from L-glutamate: step 2/2.</text>
</comment>
<comment type="subcellular location">
    <subcellularLocation>
        <location evidence="1">Cytoplasm</location>
    </subcellularLocation>
</comment>
<comment type="similarity">
    <text evidence="1">Belongs to the gamma-glutamyl phosphate reductase family.</text>
</comment>
<dbReference type="EC" id="1.2.1.41" evidence="1"/>
<dbReference type="EMBL" id="CP000352">
    <property type="protein sequence ID" value="ABF09843.1"/>
    <property type="molecule type" value="Genomic_DNA"/>
</dbReference>
<dbReference type="RefSeq" id="WP_011517506.1">
    <property type="nucleotide sequence ID" value="NC_007973.1"/>
</dbReference>
<dbReference type="SMR" id="Q1LJ33"/>
<dbReference type="STRING" id="266264.Rmet_2970"/>
<dbReference type="KEGG" id="rme:Rmet_2970"/>
<dbReference type="eggNOG" id="COG0014">
    <property type="taxonomic scope" value="Bacteria"/>
</dbReference>
<dbReference type="HOGENOM" id="CLU_030231_0_0_4"/>
<dbReference type="UniPathway" id="UPA00098">
    <property type="reaction ID" value="UER00360"/>
</dbReference>
<dbReference type="Proteomes" id="UP000002429">
    <property type="component" value="Chromosome"/>
</dbReference>
<dbReference type="GO" id="GO:0005737">
    <property type="term" value="C:cytoplasm"/>
    <property type="evidence" value="ECO:0007669"/>
    <property type="project" value="UniProtKB-SubCell"/>
</dbReference>
<dbReference type="GO" id="GO:0004350">
    <property type="term" value="F:glutamate-5-semialdehyde dehydrogenase activity"/>
    <property type="evidence" value="ECO:0007669"/>
    <property type="project" value="UniProtKB-UniRule"/>
</dbReference>
<dbReference type="GO" id="GO:0050661">
    <property type="term" value="F:NADP binding"/>
    <property type="evidence" value="ECO:0007669"/>
    <property type="project" value="InterPro"/>
</dbReference>
<dbReference type="GO" id="GO:0055129">
    <property type="term" value="P:L-proline biosynthetic process"/>
    <property type="evidence" value="ECO:0007669"/>
    <property type="project" value="UniProtKB-UniRule"/>
</dbReference>
<dbReference type="CDD" id="cd07079">
    <property type="entry name" value="ALDH_F18-19_ProA-GPR"/>
    <property type="match status" value="1"/>
</dbReference>
<dbReference type="FunFam" id="3.40.309.10:FF:000006">
    <property type="entry name" value="Gamma-glutamyl phosphate reductase"/>
    <property type="match status" value="1"/>
</dbReference>
<dbReference type="Gene3D" id="3.40.605.10">
    <property type="entry name" value="Aldehyde Dehydrogenase, Chain A, domain 1"/>
    <property type="match status" value="1"/>
</dbReference>
<dbReference type="Gene3D" id="3.40.309.10">
    <property type="entry name" value="Aldehyde Dehydrogenase, Chain A, domain 2"/>
    <property type="match status" value="1"/>
</dbReference>
<dbReference type="HAMAP" id="MF_00412">
    <property type="entry name" value="ProA"/>
    <property type="match status" value="1"/>
</dbReference>
<dbReference type="InterPro" id="IPR016161">
    <property type="entry name" value="Ald_DH/histidinol_DH"/>
</dbReference>
<dbReference type="InterPro" id="IPR016163">
    <property type="entry name" value="Ald_DH_C"/>
</dbReference>
<dbReference type="InterPro" id="IPR016162">
    <property type="entry name" value="Ald_DH_N"/>
</dbReference>
<dbReference type="InterPro" id="IPR015590">
    <property type="entry name" value="Aldehyde_DH_dom"/>
</dbReference>
<dbReference type="InterPro" id="IPR020593">
    <property type="entry name" value="G-glutamylP_reductase_CS"/>
</dbReference>
<dbReference type="InterPro" id="IPR012134">
    <property type="entry name" value="Glu-5-SA_DH"/>
</dbReference>
<dbReference type="InterPro" id="IPR000965">
    <property type="entry name" value="GPR_dom"/>
</dbReference>
<dbReference type="NCBIfam" id="NF001221">
    <property type="entry name" value="PRK00197.1"/>
    <property type="match status" value="1"/>
</dbReference>
<dbReference type="NCBIfam" id="TIGR00407">
    <property type="entry name" value="proA"/>
    <property type="match status" value="1"/>
</dbReference>
<dbReference type="PANTHER" id="PTHR11063:SF8">
    <property type="entry name" value="DELTA-1-PYRROLINE-5-CARBOXYLATE SYNTHASE"/>
    <property type="match status" value="1"/>
</dbReference>
<dbReference type="PANTHER" id="PTHR11063">
    <property type="entry name" value="GLUTAMATE SEMIALDEHYDE DEHYDROGENASE"/>
    <property type="match status" value="1"/>
</dbReference>
<dbReference type="Pfam" id="PF00171">
    <property type="entry name" value="Aldedh"/>
    <property type="match status" value="2"/>
</dbReference>
<dbReference type="PIRSF" id="PIRSF000151">
    <property type="entry name" value="GPR"/>
    <property type="match status" value="1"/>
</dbReference>
<dbReference type="SUPFAM" id="SSF53720">
    <property type="entry name" value="ALDH-like"/>
    <property type="match status" value="1"/>
</dbReference>
<dbReference type="PROSITE" id="PS01223">
    <property type="entry name" value="PROA"/>
    <property type="match status" value="1"/>
</dbReference>
<accession>Q1LJ33</accession>
<organism>
    <name type="scientific">Cupriavidus metallidurans (strain ATCC 43123 / DSM 2839 / NBRC 102507 / CH34)</name>
    <name type="common">Ralstonia metallidurans</name>
    <dbReference type="NCBI Taxonomy" id="266264"/>
    <lineage>
        <taxon>Bacteria</taxon>
        <taxon>Pseudomonadati</taxon>
        <taxon>Pseudomonadota</taxon>
        <taxon>Betaproteobacteria</taxon>
        <taxon>Burkholderiales</taxon>
        <taxon>Burkholderiaceae</taxon>
        <taxon>Cupriavidus</taxon>
    </lineage>
</organism>
<sequence>MTEFDLHAYMTRVGQQARAASRAMARASTADKNRALLTIAAAIRRDADKLKAVNARDVERARTNGQDAAFIDRLTLSDKAIATMAAGLEQIAALADPIGEISNMKFRPTGIQVGQMRVPLGVIGIIYESRPNVTIDAAALCLKSGNSTILRGGSEAIESNTALAALVAEGLAAAGLPSEAVQVIETTDRAAVGRLITMTEYVDVIVPRGGKSLIARLMEEARVPMIKHLDGICHVYIDDDADLEKAVRVCDNAKTQRYAPCNTMETLLVSREIAAKALPPLCRIYQEKGVELRVCPATRATLEAAGFSGLVDATEEDWRLEYLAPVLAIRTVDGLDAAIAHINTYGSAHTDSIITENYTTGMRFLREVDSASVMINASTRFADGFEYGLGAEIGISNDKLHARGPVGLEGLTSLKYVVFGHGEIRT</sequence>
<name>PROA_CUPMC</name>
<gene>
    <name evidence="1" type="primary">proA</name>
    <name type="ordered locus">Rmet_2970</name>
</gene>
<protein>
    <recommendedName>
        <fullName evidence="1">Gamma-glutamyl phosphate reductase</fullName>
        <shortName evidence="1">GPR</shortName>
        <ecNumber evidence="1">1.2.1.41</ecNumber>
    </recommendedName>
    <alternativeName>
        <fullName evidence="1">Glutamate-5-semialdehyde dehydrogenase</fullName>
    </alternativeName>
    <alternativeName>
        <fullName evidence="1">Glutamyl-gamma-semialdehyde dehydrogenase</fullName>
        <shortName evidence="1">GSA dehydrogenase</shortName>
    </alternativeName>
</protein>
<proteinExistence type="inferred from homology"/>
<keyword id="KW-0028">Amino-acid biosynthesis</keyword>
<keyword id="KW-0963">Cytoplasm</keyword>
<keyword id="KW-0521">NADP</keyword>
<keyword id="KW-0560">Oxidoreductase</keyword>
<keyword id="KW-0641">Proline biosynthesis</keyword>
<keyword id="KW-1185">Reference proteome</keyword>
<feature type="chain" id="PRO_0000252583" description="Gamma-glutamyl phosphate reductase">
    <location>
        <begin position="1"/>
        <end position="426"/>
    </location>
</feature>
<reference key="1">
    <citation type="journal article" date="2010" name="PLoS ONE">
        <title>The complete genome sequence of Cupriavidus metallidurans strain CH34, a master survivalist in harsh and anthropogenic environments.</title>
        <authorList>
            <person name="Janssen P.J."/>
            <person name="Van Houdt R."/>
            <person name="Moors H."/>
            <person name="Monsieurs P."/>
            <person name="Morin N."/>
            <person name="Michaux A."/>
            <person name="Benotmane M.A."/>
            <person name="Leys N."/>
            <person name="Vallaeys T."/>
            <person name="Lapidus A."/>
            <person name="Monchy S."/>
            <person name="Medigue C."/>
            <person name="Taghavi S."/>
            <person name="McCorkle S."/>
            <person name="Dunn J."/>
            <person name="van der Lelie D."/>
            <person name="Mergeay M."/>
        </authorList>
    </citation>
    <scope>NUCLEOTIDE SEQUENCE [LARGE SCALE GENOMIC DNA]</scope>
    <source>
        <strain>ATCC 43123 / DSM 2839 / NBRC 102507 / CH34</strain>
    </source>
</reference>
<evidence type="ECO:0000255" key="1">
    <source>
        <dbReference type="HAMAP-Rule" id="MF_00412"/>
    </source>
</evidence>